<keyword id="KW-0560">Oxidoreductase</keyword>
<keyword id="KW-0819">tRNA processing</keyword>
<gene>
    <name evidence="1" type="primary">trhO</name>
    <name type="ordered locus">SE_0262</name>
</gene>
<organism>
    <name type="scientific">Staphylococcus epidermidis (strain ATCC 12228 / FDA PCI 1200)</name>
    <dbReference type="NCBI Taxonomy" id="176280"/>
    <lineage>
        <taxon>Bacteria</taxon>
        <taxon>Bacillati</taxon>
        <taxon>Bacillota</taxon>
        <taxon>Bacilli</taxon>
        <taxon>Bacillales</taxon>
        <taxon>Staphylococcaceae</taxon>
        <taxon>Staphylococcus</taxon>
    </lineage>
</organism>
<dbReference type="EC" id="1.14.-.-" evidence="1"/>
<dbReference type="EMBL" id="AE015929">
    <property type="protein sequence ID" value="AAO03859.1"/>
    <property type="molecule type" value="Genomic_DNA"/>
</dbReference>
<dbReference type="RefSeq" id="NP_763817.1">
    <property type="nucleotide sequence ID" value="NC_004461.1"/>
</dbReference>
<dbReference type="RefSeq" id="WP_001829434.1">
    <property type="nucleotide sequence ID" value="NZ_WBME01000037.1"/>
</dbReference>
<dbReference type="SMR" id="Q8CTV8"/>
<dbReference type="DNASU" id="1056271"/>
<dbReference type="KEGG" id="sep:SE_0262"/>
<dbReference type="PATRIC" id="fig|176280.10.peg.240"/>
<dbReference type="eggNOG" id="COG1054">
    <property type="taxonomic scope" value="Bacteria"/>
</dbReference>
<dbReference type="HOGENOM" id="CLU_038878_1_0_9"/>
<dbReference type="OrthoDB" id="9778326at2"/>
<dbReference type="Proteomes" id="UP000001411">
    <property type="component" value="Chromosome"/>
</dbReference>
<dbReference type="GO" id="GO:0016705">
    <property type="term" value="F:oxidoreductase activity, acting on paired donors, with incorporation or reduction of molecular oxygen"/>
    <property type="evidence" value="ECO:0007669"/>
    <property type="project" value="UniProtKB-UniRule"/>
</dbReference>
<dbReference type="GO" id="GO:0006400">
    <property type="term" value="P:tRNA modification"/>
    <property type="evidence" value="ECO:0007669"/>
    <property type="project" value="UniProtKB-UniRule"/>
</dbReference>
<dbReference type="CDD" id="cd01518">
    <property type="entry name" value="RHOD_YceA"/>
    <property type="match status" value="1"/>
</dbReference>
<dbReference type="Gene3D" id="3.30.70.100">
    <property type="match status" value="1"/>
</dbReference>
<dbReference type="Gene3D" id="3.40.250.10">
    <property type="entry name" value="Rhodanese-like domain"/>
    <property type="match status" value="1"/>
</dbReference>
<dbReference type="HAMAP" id="MF_00469">
    <property type="entry name" value="TrhO"/>
    <property type="match status" value="1"/>
</dbReference>
<dbReference type="InterPro" id="IPR001763">
    <property type="entry name" value="Rhodanese-like_dom"/>
</dbReference>
<dbReference type="InterPro" id="IPR036873">
    <property type="entry name" value="Rhodanese-like_dom_sf"/>
</dbReference>
<dbReference type="InterPro" id="IPR022111">
    <property type="entry name" value="Rhodanese_C"/>
</dbReference>
<dbReference type="InterPro" id="IPR020936">
    <property type="entry name" value="TrhO"/>
</dbReference>
<dbReference type="InterPro" id="IPR040503">
    <property type="entry name" value="TRHO_N"/>
</dbReference>
<dbReference type="NCBIfam" id="NF001135">
    <property type="entry name" value="PRK00142.1-3"/>
    <property type="match status" value="1"/>
</dbReference>
<dbReference type="PANTHER" id="PTHR43268:SF3">
    <property type="entry name" value="RHODANESE-LIKE DOMAIN-CONTAINING PROTEIN 7-RELATED"/>
    <property type="match status" value="1"/>
</dbReference>
<dbReference type="PANTHER" id="PTHR43268">
    <property type="entry name" value="THIOSULFATE SULFURTRANSFERASE/RHODANESE-LIKE DOMAIN-CONTAINING PROTEIN 2"/>
    <property type="match status" value="1"/>
</dbReference>
<dbReference type="Pfam" id="PF00581">
    <property type="entry name" value="Rhodanese"/>
    <property type="match status" value="1"/>
</dbReference>
<dbReference type="Pfam" id="PF12368">
    <property type="entry name" value="Rhodanese_C"/>
    <property type="match status" value="1"/>
</dbReference>
<dbReference type="Pfam" id="PF17773">
    <property type="entry name" value="UPF0176_N"/>
    <property type="match status" value="1"/>
</dbReference>
<dbReference type="SMART" id="SM00450">
    <property type="entry name" value="RHOD"/>
    <property type="match status" value="1"/>
</dbReference>
<dbReference type="SUPFAM" id="SSF52821">
    <property type="entry name" value="Rhodanese/Cell cycle control phosphatase"/>
    <property type="match status" value="1"/>
</dbReference>
<dbReference type="PROSITE" id="PS50206">
    <property type="entry name" value="RHODANESE_3"/>
    <property type="match status" value="1"/>
</dbReference>
<sequence>MDYRVLLYYKYVTIDDPETFAAEHLKFCKEHHLKGRILVSTEGINGTLSGTKEDTDKYIEHMHADNRFADLTFKIDEAESHAFKKMHVRPRREIVALDLEEDINPREITGKYYSPKEFKAALEDENTVILDARNDYEYDLGHFRGAIRPDITRFRDLPEWVRNNKEQLDGKNIVTYCTGGIRCEKFSGWLVKEGFENVGQLHGGIATYGKDPETKGQYWDGKMYVFDERISVDVNQIDKTVIGKEHFDGTPCERYINCANPECNKQILVSEENEEKYLGACSYDCAKHERNRYVARHHISNEEWQRRLNNFKDVPEHTHA</sequence>
<accession>Q8CTV8</accession>
<reference key="1">
    <citation type="journal article" date="2003" name="Mol. Microbiol.">
        <title>Genome-based analysis of virulence genes in a non-biofilm-forming Staphylococcus epidermidis strain (ATCC 12228).</title>
        <authorList>
            <person name="Zhang Y.-Q."/>
            <person name="Ren S.-X."/>
            <person name="Li H.-L."/>
            <person name="Wang Y.-X."/>
            <person name="Fu G."/>
            <person name="Yang J."/>
            <person name="Qin Z.-Q."/>
            <person name="Miao Y.-G."/>
            <person name="Wang W.-Y."/>
            <person name="Chen R.-S."/>
            <person name="Shen Y."/>
            <person name="Chen Z."/>
            <person name="Yuan Z.-H."/>
            <person name="Zhao G.-P."/>
            <person name="Qu D."/>
            <person name="Danchin A."/>
            <person name="Wen Y.-M."/>
        </authorList>
    </citation>
    <scope>NUCLEOTIDE SEQUENCE [LARGE SCALE GENOMIC DNA]</scope>
    <source>
        <strain>ATCC 12228 / FDA PCI 1200</strain>
    </source>
</reference>
<comment type="function">
    <text evidence="1">Catalyzes oxygen-dependent 5-hydroxyuridine (ho5U) modification at position 34 in tRNAs.</text>
</comment>
<comment type="catalytic activity">
    <reaction evidence="1">
        <text>uridine(34) in tRNA + AH2 + O2 = 5-hydroxyuridine(34) in tRNA + A + H2O</text>
        <dbReference type="Rhea" id="RHEA:64224"/>
        <dbReference type="Rhea" id="RHEA-COMP:11727"/>
        <dbReference type="Rhea" id="RHEA-COMP:13381"/>
        <dbReference type="ChEBI" id="CHEBI:13193"/>
        <dbReference type="ChEBI" id="CHEBI:15377"/>
        <dbReference type="ChEBI" id="CHEBI:15379"/>
        <dbReference type="ChEBI" id="CHEBI:17499"/>
        <dbReference type="ChEBI" id="CHEBI:65315"/>
        <dbReference type="ChEBI" id="CHEBI:136877"/>
    </reaction>
</comment>
<comment type="similarity">
    <text evidence="1">Belongs to the TrhO family.</text>
</comment>
<feature type="chain" id="PRO_0000161519" description="tRNA uridine(34) hydroxylase">
    <location>
        <begin position="1"/>
        <end position="320"/>
    </location>
</feature>
<feature type="domain" description="Rhodanese" evidence="1">
    <location>
        <begin position="123"/>
        <end position="217"/>
    </location>
</feature>
<feature type="active site" description="Cysteine persulfide intermediate" evidence="1">
    <location>
        <position position="177"/>
    </location>
</feature>
<evidence type="ECO:0000255" key="1">
    <source>
        <dbReference type="HAMAP-Rule" id="MF_00469"/>
    </source>
</evidence>
<proteinExistence type="inferred from homology"/>
<name>TRHO_STAES</name>
<protein>
    <recommendedName>
        <fullName evidence="1">tRNA uridine(34) hydroxylase</fullName>
        <ecNumber evidence="1">1.14.-.-</ecNumber>
    </recommendedName>
    <alternativeName>
        <fullName evidence="1">tRNA hydroxylation protein O</fullName>
    </alternativeName>
</protein>